<feature type="signal peptide" evidence="2">
    <location>
        <begin position="1"/>
        <end position="20"/>
    </location>
</feature>
<feature type="propeptide" id="PRO_0000415047" evidence="1">
    <location>
        <begin position="21"/>
        <end position="40"/>
    </location>
</feature>
<feature type="peptide" id="PRO_0000415048" description="Conotoxin Cl9.6">
    <location>
        <begin position="42"/>
        <end position="81"/>
    </location>
</feature>
<feature type="disulfide bond" evidence="1">
    <location>
        <begin position="46"/>
        <end position="69"/>
    </location>
</feature>
<feature type="disulfide bond" evidence="1">
    <location>
        <begin position="54"/>
        <end position="76"/>
    </location>
</feature>
<feature type="disulfide bond" evidence="1">
    <location>
        <begin position="60"/>
        <end position="78"/>
    </location>
</feature>
<evidence type="ECO:0000250" key="1"/>
<evidence type="ECO:0000255" key="2"/>
<comment type="subcellular location">
    <subcellularLocation>
        <location evidence="1">Secreted</location>
    </subcellularLocation>
</comment>
<comment type="tissue specificity">
    <text>Expressed by the venom duct.</text>
</comment>
<comment type="domain">
    <text>The cysteine framework is IX (C-C-C-C-C-C).</text>
</comment>
<protein>
    <recommendedName>
        <fullName>Conotoxin Cl9.6</fullName>
    </recommendedName>
</protein>
<reference key="1">
    <citation type="journal article" date="2010" name="Mol. Phylogenet. Evol.">
        <title>Evolution of Conus peptide toxins: analysis of Conus californicus Reeve, 1844.</title>
        <authorList>
            <person name="Biggs J.S."/>
            <person name="Watkins M."/>
            <person name="Puillandre N."/>
            <person name="Ownby J.P."/>
            <person name="Lopez-Vera E."/>
            <person name="Christensen S."/>
            <person name="Moreno K.J."/>
            <person name="Bernaldez J."/>
            <person name="Licea-Navarro A."/>
            <person name="Corneli P.S."/>
            <person name="Olivera B.M."/>
        </authorList>
    </citation>
    <scope>NUCLEOTIDE SEQUENCE [GENOMIC DNA]</scope>
</reference>
<dbReference type="EMBL" id="FJ959165">
    <property type="protein sequence ID" value="ADB93135.1"/>
    <property type="molecule type" value="Genomic_DNA"/>
</dbReference>
<dbReference type="SMR" id="D6C4M3"/>
<dbReference type="ConoServer" id="4049">
    <property type="toxin name" value="Cal9.6 precursor"/>
</dbReference>
<dbReference type="GO" id="GO:0005576">
    <property type="term" value="C:extracellular region"/>
    <property type="evidence" value="ECO:0007669"/>
    <property type="project" value="UniProtKB-SubCell"/>
</dbReference>
<dbReference type="GO" id="GO:0090729">
    <property type="term" value="F:toxin activity"/>
    <property type="evidence" value="ECO:0007669"/>
    <property type="project" value="UniProtKB-KW"/>
</dbReference>
<name>CU96_CONCL</name>
<organism>
    <name type="scientific">Californiconus californicus</name>
    <name type="common">California cone</name>
    <name type="synonym">Conus californicus</name>
    <dbReference type="NCBI Taxonomy" id="1736779"/>
    <lineage>
        <taxon>Eukaryota</taxon>
        <taxon>Metazoa</taxon>
        <taxon>Spiralia</taxon>
        <taxon>Lophotrochozoa</taxon>
        <taxon>Mollusca</taxon>
        <taxon>Gastropoda</taxon>
        <taxon>Caenogastropoda</taxon>
        <taxon>Neogastropoda</taxon>
        <taxon>Conoidea</taxon>
        <taxon>Conidae</taxon>
        <taxon>Californiconus</taxon>
    </lineage>
</organism>
<keyword id="KW-1015">Disulfide bond</keyword>
<keyword id="KW-0528">Neurotoxin</keyword>
<keyword id="KW-0964">Secreted</keyword>
<keyword id="KW-0732">Signal</keyword>
<keyword id="KW-0800">Toxin</keyword>
<accession>D6C4M3</accession>
<sequence length="81" mass="8484">MSTLGMTLLILLLLLPLATPDDVGQPPKRDTLRNLLKIGTRGQGGCVPPGGGRCKANQACTKGGNPGTCGFQYDLCLCLRN</sequence>
<proteinExistence type="inferred from homology"/>